<accession>B3E331</accession>
<protein>
    <recommendedName>
        <fullName evidence="1">Large ribosomal subunit protein bL21</fullName>
    </recommendedName>
    <alternativeName>
        <fullName evidence="2">50S ribosomal protein L21</fullName>
    </alternativeName>
</protein>
<evidence type="ECO:0000255" key="1">
    <source>
        <dbReference type="HAMAP-Rule" id="MF_01363"/>
    </source>
</evidence>
<evidence type="ECO:0000305" key="2"/>
<name>RL21_TRIL1</name>
<keyword id="KW-1185">Reference proteome</keyword>
<keyword id="KW-0687">Ribonucleoprotein</keyword>
<keyword id="KW-0689">Ribosomal protein</keyword>
<keyword id="KW-0694">RNA-binding</keyword>
<keyword id="KW-0699">rRNA-binding</keyword>
<reference key="1">
    <citation type="submission" date="2008-05" db="EMBL/GenBank/DDBJ databases">
        <title>Complete sequence of chromosome of Geobacter lovleyi SZ.</title>
        <authorList>
            <consortium name="US DOE Joint Genome Institute"/>
            <person name="Lucas S."/>
            <person name="Copeland A."/>
            <person name="Lapidus A."/>
            <person name="Glavina del Rio T."/>
            <person name="Dalin E."/>
            <person name="Tice H."/>
            <person name="Bruce D."/>
            <person name="Goodwin L."/>
            <person name="Pitluck S."/>
            <person name="Chertkov O."/>
            <person name="Meincke L."/>
            <person name="Brettin T."/>
            <person name="Detter J.C."/>
            <person name="Han C."/>
            <person name="Tapia R."/>
            <person name="Kuske C.R."/>
            <person name="Schmutz J."/>
            <person name="Larimer F."/>
            <person name="Land M."/>
            <person name="Hauser L."/>
            <person name="Kyrpides N."/>
            <person name="Mikhailova N."/>
            <person name="Sung Y."/>
            <person name="Fletcher K.E."/>
            <person name="Ritalahti K.M."/>
            <person name="Loeffler F.E."/>
            <person name="Richardson P."/>
        </authorList>
    </citation>
    <scope>NUCLEOTIDE SEQUENCE [LARGE SCALE GENOMIC DNA]</scope>
    <source>
        <strain>ATCC BAA-1151 / DSM 17278 / SZ</strain>
    </source>
</reference>
<sequence length="102" mass="11126">MYAVIKTGGKQYKVAEGDFLKVEKLDNIVGDTIEFGEVLMIGGDAVKVGAPLVAGASVTAKVAVQGRDKKILVFKSKRRKNSRKLIGHRQYHTVLKIEKISA</sequence>
<proteinExistence type="inferred from homology"/>
<comment type="function">
    <text evidence="1">This protein binds to 23S rRNA in the presence of protein L20.</text>
</comment>
<comment type="subunit">
    <text evidence="1">Part of the 50S ribosomal subunit. Contacts protein L20.</text>
</comment>
<comment type="similarity">
    <text evidence="1">Belongs to the bacterial ribosomal protein bL21 family.</text>
</comment>
<gene>
    <name evidence="1" type="primary">rplU</name>
    <name type="ordered locus">Glov_3590</name>
</gene>
<feature type="chain" id="PRO_1000143804" description="Large ribosomal subunit protein bL21">
    <location>
        <begin position="1"/>
        <end position="102"/>
    </location>
</feature>
<dbReference type="EMBL" id="CP001089">
    <property type="protein sequence ID" value="ACD97291.1"/>
    <property type="molecule type" value="Genomic_DNA"/>
</dbReference>
<dbReference type="RefSeq" id="WP_012471609.1">
    <property type="nucleotide sequence ID" value="NC_010814.1"/>
</dbReference>
<dbReference type="SMR" id="B3E331"/>
<dbReference type="STRING" id="398767.Glov_3590"/>
<dbReference type="KEGG" id="glo:Glov_3590"/>
<dbReference type="eggNOG" id="COG0261">
    <property type="taxonomic scope" value="Bacteria"/>
</dbReference>
<dbReference type="HOGENOM" id="CLU_061463_3_2_7"/>
<dbReference type="OrthoDB" id="9813334at2"/>
<dbReference type="Proteomes" id="UP000002420">
    <property type="component" value="Chromosome"/>
</dbReference>
<dbReference type="GO" id="GO:0005737">
    <property type="term" value="C:cytoplasm"/>
    <property type="evidence" value="ECO:0007669"/>
    <property type="project" value="UniProtKB-ARBA"/>
</dbReference>
<dbReference type="GO" id="GO:1990904">
    <property type="term" value="C:ribonucleoprotein complex"/>
    <property type="evidence" value="ECO:0007669"/>
    <property type="project" value="UniProtKB-KW"/>
</dbReference>
<dbReference type="GO" id="GO:0005840">
    <property type="term" value="C:ribosome"/>
    <property type="evidence" value="ECO:0007669"/>
    <property type="project" value="UniProtKB-KW"/>
</dbReference>
<dbReference type="GO" id="GO:0019843">
    <property type="term" value="F:rRNA binding"/>
    <property type="evidence" value="ECO:0007669"/>
    <property type="project" value="UniProtKB-UniRule"/>
</dbReference>
<dbReference type="GO" id="GO:0003735">
    <property type="term" value="F:structural constituent of ribosome"/>
    <property type="evidence" value="ECO:0007669"/>
    <property type="project" value="InterPro"/>
</dbReference>
<dbReference type="GO" id="GO:0006412">
    <property type="term" value="P:translation"/>
    <property type="evidence" value="ECO:0007669"/>
    <property type="project" value="UniProtKB-UniRule"/>
</dbReference>
<dbReference type="HAMAP" id="MF_01363">
    <property type="entry name" value="Ribosomal_bL21"/>
    <property type="match status" value="1"/>
</dbReference>
<dbReference type="InterPro" id="IPR028909">
    <property type="entry name" value="bL21-like"/>
</dbReference>
<dbReference type="InterPro" id="IPR036164">
    <property type="entry name" value="bL21-like_sf"/>
</dbReference>
<dbReference type="InterPro" id="IPR001787">
    <property type="entry name" value="Ribosomal_bL21"/>
</dbReference>
<dbReference type="InterPro" id="IPR018258">
    <property type="entry name" value="Ribosomal_bL21_CS"/>
</dbReference>
<dbReference type="NCBIfam" id="TIGR00061">
    <property type="entry name" value="L21"/>
    <property type="match status" value="1"/>
</dbReference>
<dbReference type="PANTHER" id="PTHR21349">
    <property type="entry name" value="50S RIBOSOMAL PROTEIN L21"/>
    <property type="match status" value="1"/>
</dbReference>
<dbReference type="PANTHER" id="PTHR21349:SF0">
    <property type="entry name" value="LARGE RIBOSOMAL SUBUNIT PROTEIN BL21M"/>
    <property type="match status" value="1"/>
</dbReference>
<dbReference type="Pfam" id="PF00829">
    <property type="entry name" value="Ribosomal_L21p"/>
    <property type="match status" value="1"/>
</dbReference>
<dbReference type="SUPFAM" id="SSF141091">
    <property type="entry name" value="L21p-like"/>
    <property type="match status" value="1"/>
</dbReference>
<dbReference type="PROSITE" id="PS01169">
    <property type="entry name" value="RIBOSOMAL_L21"/>
    <property type="match status" value="1"/>
</dbReference>
<organism>
    <name type="scientific">Trichlorobacter lovleyi (strain ATCC BAA-1151 / DSM 17278 / SZ)</name>
    <name type="common">Geobacter lovleyi</name>
    <dbReference type="NCBI Taxonomy" id="398767"/>
    <lineage>
        <taxon>Bacteria</taxon>
        <taxon>Pseudomonadati</taxon>
        <taxon>Thermodesulfobacteriota</taxon>
        <taxon>Desulfuromonadia</taxon>
        <taxon>Geobacterales</taxon>
        <taxon>Geobacteraceae</taxon>
        <taxon>Trichlorobacter</taxon>
    </lineage>
</organism>